<proteinExistence type="inferred from homology"/>
<reference key="1">
    <citation type="journal article" date="2006" name="Appl. Environ. Microbiol.">
        <title>Genome sequence of the chemolithoautotrophic nitrite-oxidizing bacterium Nitrobacter winogradskyi Nb-255.</title>
        <authorList>
            <person name="Starkenburg S.R."/>
            <person name="Chain P.S.G."/>
            <person name="Sayavedra-Soto L.A."/>
            <person name="Hauser L."/>
            <person name="Land M.L."/>
            <person name="Larimer F.W."/>
            <person name="Malfatti S.A."/>
            <person name="Klotz M.G."/>
            <person name="Bottomley P.J."/>
            <person name="Arp D.J."/>
            <person name="Hickey W.J."/>
        </authorList>
    </citation>
    <scope>NUCLEOTIDE SEQUENCE [LARGE SCALE GENOMIC DNA]</scope>
    <source>
        <strain>ATCC 25391 / DSM 10237 / CIP 104748 / NCIMB 11846 / Nb-255</strain>
    </source>
</reference>
<evidence type="ECO:0000255" key="1">
    <source>
        <dbReference type="HAMAP-Rule" id="MF_00051"/>
    </source>
</evidence>
<organism>
    <name type="scientific">Nitrobacter winogradskyi (strain ATCC 25391 / DSM 10237 / CIP 104748 / NCIMB 11846 / Nb-255)</name>
    <dbReference type="NCBI Taxonomy" id="323098"/>
    <lineage>
        <taxon>Bacteria</taxon>
        <taxon>Pseudomonadati</taxon>
        <taxon>Pseudomonadota</taxon>
        <taxon>Alphaproteobacteria</taxon>
        <taxon>Hyphomicrobiales</taxon>
        <taxon>Nitrobacteraceae</taxon>
        <taxon>Nitrobacter</taxon>
    </lineage>
</organism>
<accession>Q3SRV3</accession>
<keyword id="KW-0028">Amino-acid biosynthesis</keyword>
<keyword id="KW-0963">Cytoplasm</keyword>
<keyword id="KW-0554">One-carbon metabolism</keyword>
<keyword id="KW-0663">Pyridoxal phosphate</keyword>
<keyword id="KW-1185">Reference proteome</keyword>
<keyword id="KW-0808">Transferase</keyword>
<name>GLYA_NITWN</name>
<protein>
    <recommendedName>
        <fullName evidence="1">Serine hydroxymethyltransferase</fullName>
        <shortName evidence="1">SHMT</shortName>
        <shortName evidence="1">Serine methylase</shortName>
        <ecNumber evidence="1">2.1.2.1</ecNumber>
    </recommendedName>
</protein>
<gene>
    <name evidence="1" type="primary">glyA</name>
    <name type="ordered locus">Nwi_1727</name>
</gene>
<sequence>MDSSAKTASAPDPFFAGTLAEADPEIAAAITGELGRQRHEIELIASENIVSRAVLEAQGSVMTNKYAEGYPGARYYGGCEWVDVAETLAIERAKKLFGARFANVQPNSGSQMNQAVFLALLQPGDTFMGLDLAAGGHLTHGAPVNMSGKWFKVAHYTVRRDDHLIDMDEVARRAEEVKPKLIIAGGSAYSRPWDFKRFREIADSVGAYLMVDMAHFAGLVAGGVHASPVPHAHVTTTTTHKSLRGPRGGLILCNDEALAKKFNSAIFPGLQGGPLMHVIAAKAVALGEALRPDFKIYAKNVVENARALAESLRGHGFDIVSGGTDNHLMLVDLRPKGLKGNVSEKALVRAGLTCNKNGIPFDPEKPFVTSGLRLGTPATTTRGFGVSEFKQVGGLIAEVLTAIAQAEDGKAPLVEAAVKEKVKALTDRFPIYQ</sequence>
<feature type="chain" id="PRO_0000234991" description="Serine hydroxymethyltransferase">
    <location>
        <begin position="1"/>
        <end position="433"/>
    </location>
</feature>
<feature type="binding site" evidence="1">
    <location>
        <position position="132"/>
    </location>
    <ligand>
        <name>(6S)-5,6,7,8-tetrahydrofolate</name>
        <dbReference type="ChEBI" id="CHEBI:57453"/>
    </ligand>
</feature>
<feature type="binding site" evidence="1">
    <location>
        <begin position="136"/>
        <end position="138"/>
    </location>
    <ligand>
        <name>(6S)-5,6,7,8-tetrahydrofolate</name>
        <dbReference type="ChEBI" id="CHEBI:57453"/>
    </ligand>
</feature>
<feature type="site" description="Plays an important role in substrate specificity" evidence="1">
    <location>
        <position position="240"/>
    </location>
</feature>
<feature type="modified residue" description="N6-(pyridoxal phosphate)lysine" evidence="1">
    <location>
        <position position="241"/>
    </location>
</feature>
<dbReference type="EC" id="2.1.2.1" evidence="1"/>
<dbReference type="EMBL" id="CP000115">
    <property type="protein sequence ID" value="ABA04988.1"/>
    <property type="molecule type" value="Genomic_DNA"/>
</dbReference>
<dbReference type="RefSeq" id="WP_011314984.1">
    <property type="nucleotide sequence ID" value="NC_007406.1"/>
</dbReference>
<dbReference type="SMR" id="Q3SRV3"/>
<dbReference type="STRING" id="323098.Nwi_1727"/>
<dbReference type="KEGG" id="nwi:Nwi_1727"/>
<dbReference type="eggNOG" id="COG0112">
    <property type="taxonomic scope" value="Bacteria"/>
</dbReference>
<dbReference type="HOGENOM" id="CLU_022477_2_1_5"/>
<dbReference type="OrthoDB" id="9803846at2"/>
<dbReference type="UniPathway" id="UPA00193"/>
<dbReference type="UniPathway" id="UPA00288">
    <property type="reaction ID" value="UER01023"/>
</dbReference>
<dbReference type="Proteomes" id="UP000002531">
    <property type="component" value="Chromosome"/>
</dbReference>
<dbReference type="GO" id="GO:0005829">
    <property type="term" value="C:cytosol"/>
    <property type="evidence" value="ECO:0007669"/>
    <property type="project" value="TreeGrafter"/>
</dbReference>
<dbReference type="GO" id="GO:0004372">
    <property type="term" value="F:glycine hydroxymethyltransferase activity"/>
    <property type="evidence" value="ECO:0007669"/>
    <property type="project" value="UniProtKB-UniRule"/>
</dbReference>
<dbReference type="GO" id="GO:0030170">
    <property type="term" value="F:pyridoxal phosphate binding"/>
    <property type="evidence" value="ECO:0007669"/>
    <property type="project" value="UniProtKB-UniRule"/>
</dbReference>
<dbReference type="GO" id="GO:0019264">
    <property type="term" value="P:glycine biosynthetic process from serine"/>
    <property type="evidence" value="ECO:0007669"/>
    <property type="project" value="UniProtKB-UniRule"/>
</dbReference>
<dbReference type="GO" id="GO:0035999">
    <property type="term" value="P:tetrahydrofolate interconversion"/>
    <property type="evidence" value="ECO:0007669"/>
    <property type="project" value="UniProtKB-UniRule"/>
</dbReference>
<dbReference type="CDD" id="cd00378">
    <property type="entry name" value="SHMT"/>
    <property type="match status" value="1"/>
</dbReference>
<dbReference type="FunFam" id="3.40.640.10:FF:000001">
    <property type="entry name" value="Serine hydroxymethyltransferase"/>
    <property type="match status" value="1"/>
</dbReference>
<dbReference type="Gene3D" id="3.90.1150.10">
    <property type="entry name" value="Aspartate Aminotransferase, domain 1"/>
    <property type="match status" value="1"/>
</dbReference>
<dbReference type="Gene3D" id="3.40.640.10">
    <property type="entry name" value="Type I PLP-dependent aspartate aminotransferase-like (Major domain)"/>
    <property type="match status" value="1"/>
</dbReference>
<dbReference type="HAMAP" id="MF_00051">
    <property type="entry name" value="SHMT"/>
    <property type="match status" value="1"/>
</dbReference>
<dbReference type="InterPro" id="IPR015424">
    <property type="entry name" value="PyrdxlP-dep_Trfase"/>
</dbReference>
<dbReference type="InterPro" id="IPR015421">
    <property type="entry name" value="PyrdxlP-dep_Trfase_major"/>
</dbReference>
<dbReference type="InterPro" id="IPR015422">
    <property type="entry name" value="PyrdxlP-dep_Trfase_small"/>
</dbReference>
<dbReference type="InterPro" id="IPR001085">
    <property type="entry name" value="Ser_HO-MeTrfase"/>
</dbReference>
<dbReference type="InterPro" id="IPR049943">
    <property type="entry name" value="Ser_HO-MeTrfase-like"/>
</dbReference>
<dbReference type="InterPro" id="IPR019798">
    <property type="entry name" value="Ser_HO-MeTrfase_PLP_BS"/>
</dbReference>
<dbReference type="InterPro" id="IPR039429">
    <property type="entry name" value="SHMT-like_dom"/>
</dbReference>
<dbReference type="NCBIfam" id="NF000586">
    <property type="entry name" value="PRK00011.1"/>
    <property type="match status" value="1"/>
</dbReference>
<dbReference type="PANTHER" id="PTHR11680">
    <property type="entry name" value="SERINE HYDROXYMETHYLTRANSFERASE"/>
    <property type="match status" value="1"/>
</dbReference>
<dbReference type="PANTHER" id="PTHR11680:SF35">
    <property type="entry name" value="SERINE HYDROXYMETHYLTRANSFERASE 1"/>
    <property type="match status" value="1"/>
</dbReference>
<dbReference type="Pfam" id="PF00464">
    <property type="entry name" value="SHMT"/>
    <property type="match status" value="1"/>
</dbReference>
<dbReference type="PIRSF" id="PIRSF000412">
    <property type="entry name" value="SHMT"/>
    <property type="match status" value="1"/>
</dbReference>
<dbReference type="SUPFAM" id="SSF53383">
    <property type="entry name" value="PLP-dependent transferases"/>
    <property type="match status" value="1"/>
</dbReference>
<dbReference type="PROSITE" id="PS00096">
    <property type="entry name" value="SHMT"/>
    <property type="match status" value="1"/>
</dbReference>
<comment type="function">
    <text evidence="1">Catalyzes the reversible interconversion of serine and glycine with tetrahydrofolate (THF) serving as the one-carbon carrier. This reaction serves as the major source of one-carbon groups required for the biosynthesis of purines, thymidylate, methionine, and other important biomolecules. Also exhibits THF-independent aldolase activity toward beta-hydroxyamino acids, producing glycine and aldehydes, via a retro-aldol mechanism.</text>
</comment>
<comment type="catalytic activity">
    <reaction evidence="1">
        <text>(6R)-5,10-methylene-5,6,7,8-tetrahydrofolate + glycine + H2O = (6S)-5,6,7,8-tetrahydrofolate + L-serine</text>
        <dbReference type="Rhea" id="RHEA:15481"/>
        <dbReference type="ChEBI" id="CHEBI:15377"/>
        <dbReference type="ChEBI" id="CHEBI:15636"/>
        <dbReference type="ChEBI" id="CHEBI:33384"/>
        <dbReference type="ChEBI" id="CHEBI:57305"/>
        <dbReference type="ChEBI" id="CHEBI:57453"/>
        <dbReference type="EC" id="2.1.2.1"/>
    </reaction>
</comment>
<comment type="cofactor">
    <cofactor evidence="1">
        <name>pyridoxal 5'-phosphate</name>
        <dbReference type="ChEBI" id="CHEBI:597326"/>
    </cofactor>
</comment>
<comment type="pathway">
    <text evidence="1">One-carbon metabolism; tetrahydrofolate interconversion.</text>
</comment>
<comment type="pathway">
    <text evidence="1">Amino-acid biosynthesis; glycine biosynthesis; glycine from L-serine: step 1/1.</text>
</comment>
<comment type="subunit">
    <text evidence="1">Homodimer.</text>
</comment>
<comment type="subcellular location">
    <subcellularLocation>
        <location evidence="1">Cytoplasm</location>
    </subcellularLocation>
</comment>
<comment type="similarity">
    <text evidence="1">Belongs to the SHMT family.</text>
</comment>